<reference key="1">
    <citation type="journal article" date="2001" name="Curr. Biol.">
        <title>Establishment of polarity in lateral organs of plants.</title>
        <authorList>
            <person name="Eshed Y."/>
            <person name="Baum S.F."/>
            <person name="Perea J.V."/>
            <person name="Bowman J.L."/>
        </authorList>
    </citation>
    <scope>NUCLEOTIDE SEQUENCE [MRNA] (ISOFORM 1)</scope>
    <source>
        <strain>cv. Columbia</strain>
    </source>
</reference>
<reference key="2">
    <citation type="journal article" date="1998" name="DNA Res.">
        <title>Structural analysis of Arabidopsis thaliana chromosome 5. VI. Sequence features of the regions of 1,367,185 bp covered by 19 physically assigned P1 and TAC clones.</title>
        <authorList>
            <person name="Kotani H."/>
            <person name="Nakamura Y."/>
            <person name="Sato S."/>
            <person name="Asamizu E."/>
            <person name="Kaneko T."/>
            <person name="Miyajima N."/>
            <person name="Tabata S."/>
        </authorList>
    </citation>
    <scope>NUCLEOTIDE SEQUENCE [LARGE SCALE GENOMIC DNA]</scope>
    <source>
        <strain>cv. Columbia</strain>
    </source>
</reference>
<reference key="3">
    <citation type="journal article" date="2017" name="Plant J.">
        <title>Araport11: a complete reannotation of the Arabidopsis thaliana reference genome.</title>
        <authorList>
            <person name="Cheng C.Y."/>
            <person name="Krishnakumar V."/>
            <person name="Chan A.P."/>
            <person name="Thibaud-Nissen F."/>
            <person name="Schobel S."/>
            <person name="Town C.D."/>
        </authorList>
    </citation>
    <scope>GENOME REANNOTATION</scope>
    <source>
        <strain>cv. Columbia</strain>
    </source>
</reference>
<reference key="4">
    <citation type="submission" date="2006-07" db="EMBL/GenBank/DDBJ databases">
        <title>Arabidopsis ORF clones.</title>
        <authorList>
            <person name="Quinitio C."/>
            <person name="Chen H."/>
            <person name="Kim C.J."/>
            <person name="Shinn P."/>
            <person name="Ecker J.R."/>
        </authorList>
    </citation>
    <scope>NUCLEOTIDE SEQUENCE [LARGE SCALE MRNA] (ISOFORM 1)</scope>
    <source>
        <strain>cv. Columbia</strain>
    </source>
</reference>
<reference key="5">
    <citation type="journal article" date="2004" name="Plant Physiol.">
        <title>Roles for Class III HD-Zip and KANADI genes in Arabidopsis root development.</title>
        <authorList>
            <person name="Hawker N.P."/>
            <person name="Bowman J.L."/>
        </authorList>
    </citation>
    <scope>TISSUE SPECIFICITY</scope>
</reference>
<reference key="6">
    <citation type="journal article" date="2006" name="Plant J.">
        <title>ABERRANT TESTA SHAPE encodes a KANADI family member, linking polarity determination to separation and growth of Arabidopsis ovule integuments.</title>
        <authorList>
            <person name="McAbee J.M."/>
            <person name="Hill T.A."/>
            <person name="Skinner D.J."/>
            <person name="Izhaki A."/>
            <person name="Hauser B.A."/>
            <person name="Meister R.J."/>
            <person name="Venugopala Reddy G."/>
            <person name="Meyerowitz E.M."/>
            <person name="Bowman J.L."/>
            <person name="Gasser C.S."/>
        </authorList>
    </citation>
    <scope>FUNCTION</scope>
    <scope>DEVELOPMENTAL STAGE</scope>
    <scope>DISRUPTION PHENOTYPE</scope>
    <scope>MUTAGENESIS OF PRO-133</scope>
</reference>
<reference key="7">
    <citation type="journal article" date="2009" name="Plant J.">
        <title>Roles of polarity determinants in ovule development.</title>
        <authorList>
            <person name="Kelley D.R."/>
            <person name="Skinner D.J."/>
            <person name="Gasser C.S."/>
        </authorList>
    </citation>
    <scope>FUNCTION</scope>
</reference>
<reference key="8">
    <citation type="journal article" date="2010" name="Plant Biotechnol. J.">
        <title>A new dominant Arabidopsis transparent testa mutant, sk21-D, and modulation of seed flavonoid biosynthesis by KAN4.</title>
        <authorList>
            <person name="Gao P."/>
            <person name="Li X."/>
            <person name="Cui D."/>
            <person name="Wu L."/>
            <person name="Parkin I."/>
            <person name="Gruber M.Y."/>
        </authorList>
    </citation>
    <scope>FUNCTION</scope>
    <scope>SUBCELLULAR LOCATION</scope>
    <scope>ALTERNATIVE SPLICING</scope>
</reference>
<protein>
    <recommendedName>
        <fullName>Probable transcription factor KAN4</fullName>
    </recommendedName>
    <alternativeName>
        <fullName>Protein ABERRANT TESTA SHAPE</fullName>
    </alternativeName>
    <alternativeName>
        <fullName>Protein KANADI 4</fullName>
    </alternativeName>
</protein>
<proteinExistence type="evidence at protein level"/>
<dbReference type="EMBL" id="AB013391">
    <property type="protein sequence ID" value="BAB10501.1"/>
    <property type="molecule type" value="Genomic_DNA"/>
</dbReference>
<dbReference type="EMBL" id="CP002688">
    <property type="protein sequence ID" value="AED94838.1"/>
    <property type="molecule type" value="Genomic_DNA"/>
</dbReference>
<dbReference type="EMBL" id="CP002688">
    <property type="protein sequence ID" value="AED94839.1"/>
    <property type="molecule type" value="Genomic_DNA"/>
</dbReference>
<dbReference type="EMBL" id="AY048691">
    <property type="protein sequence ID" value="AAL05439.1"/>
    <property type="molecule type" value="mRNA"/>
</dbReference>
<dbReference type="EMBL" id="BT026053">
    <property type="protein sequence ID" value="ABG48409.1"/>
    <property type="molecule type" value="mRNA"/>
</dbReference>
<dbReference type="RefSeq" id="NP_001119363.1">
    <molecule id="Q9FJV5-2"/>
    <property type="nucleotide sequence ID" value="NM_001125891.2"/>
</dbReference>
<dbReference type="RefSeq" id="NP_199077.1">
    <molecule id="Q9FJV5-1"/>
    <property type="nucleotide sequence ID" value="NM_123627.3"/>
</dbReference>
<dbReference type="SMR" id="Q9FJV5"/>
<dbReference type="BioGRID" id="19520">
    <property type="interactions" value="10"/>
</dbReference>
<dbReference type="FunCoup" id="Q9FJV5">
    <property type="interactions" value="248"/>
</dbReference>
<dbReference type="IntAct" id="Q9FJV5">
    <property type="interactions" value="8"/>
</dbReference>
<dbReference type="STRING" id="3702.Q9FJV5"/>
<dbReference type="PaxDb" id="3702-AT5G42630.1"/>
<dbReference type="EnsemblPlants" id="AT5G42630.1">
    <molecule id="Q9FJV5-1"/>
    <property type="protein sequence ID" value="AT5G42630.1"/>
    <property type="gene ID" value="AT5G42630"/>
</dbReference>
<dbReference type="EnsemblPlants" id="AT5G42630.2">
    <molecule id="Q9FJV5-2"/>
    <property type="protein sequence ID" value="AT5G42630.2"/>
    <property type="gene ID" value="AT5G42630"/>
</dbReference>
<dbReference type="GeneID" id="834270"/>
<dbReference type="Gramene" id="AT5G42630.1">
    <molecule id="Q9FJV5-1"/>
    <property type="protein sequence ID" value="AT5G42630.1"/>
    <property type="gene ID" value="AT5G42630"/>
</dbReference>
<dbReference type="Gramene" id="AT5G42630.2">
    <molecule id="Q9FJV5-2"/>
    <property type="protein sequence ID" value="AT5G42630.2"/>
    <property type="gene ID" value="AT5G42630"/>
</dbReference>
<dbReference type="KEGG" id="ath:AT5G42630"/>
<dbReference type="Araport" id="AT5G42630"/>
<dbReference type="TAIR" id="AT5G42630">
    <property type="gene designation" value="ATS"/>
</dbReference>
<dbReference type="eggNOG" id="ENOG502R498">
    <property type="taxonomic scope" value="Eukaryota"/>
</dbReference>
<dbReference type="InParanoid" id="Q9FJV5"/>
<dbReference type="OMA" id="MFTNSHT"/>
<dbReference type="PhylomeDB" id="Q9FJV5"/>
<dbReference type="PRO" id="PR:Q9FJV5"/>
<dbReference type="Proteomes" id="UP000006548">
    <property type="component" value="Chromosome 5"/>
</dbReference>
<dbReference type="ExpressionAtlas" id="Q9FJV5">
    <property type="expression patterns" value="baseline and differential"/>
</dbReference>
<dbReference type="GO" id="GO:0005634">
    <property type="term" value="C:nucleus"/>
    <property type="evidence" value="ECO:0000314"/>
    <property type="project" value="UniProtKB"/>
</dbReference>
<dbReference type="GO" id="GO:0003700">
    <property type="term" value="F:DNA-binding transcription factor activity"/>
    <property type="evidence" value="ECO:0000250"/>
    <property type="project" value="TAIR"/>
</dbReference>
<dbReference type="GO" id="GO:0000976">
    <property type="term" value="F:transcription cis-regulatory region binding"/>
    <property type="evidence" value="ECO:0000314"/>
    <property type="project" value="UniProtKB"/>
</dbReference>
<dbReference type="GO" id="GO:0010158">
    <property type="term" value="P:abaxial cell fate specification"/>
    <property type="evidence" value="ECO:0007669"/>
    <property type="project" value="InterPro"/>
</dbReference>
<dbReference type="GO" id="GO:0080060">
    <property type="term" value="P:integument development"/>
    <property type="evidence" value="ECO:0000315"/>
    <property type="project" value="UniProtKB"/>
</dbReference>
<dbReference type="GO" id="GO:0048481">
    <property type="term" value="P:plant ovule development"/>
    <property type="evidence" value="ECO:0000315"/>
    <property type="project" value="TAIR"/>
</dbReference>
<dbReference type="GO" id="GO:0006355">
    <property type="term" value="P:regulation of DNA-templated transcription"/>
    <property type="evidence" value="ECO:0000315"/>
    <property type="project" value="UniProtKB"/>
</dbReference>
<dbReference type="FunFam" id="1.10.10.60:FF:000002">
    <property type="entry name" value="Myb family transcription factor"/>
    <property type="match status" value="1"/>
</dbReference>
<dbReference type="Gene3D" id="1.10.10.60">
    <property type="entry name" value="Homeodomain-like"/>
    <property type="match status" value="1"/>
</dbReference>
<dbReference type="InterPro" id="IPR009057">
    <property type="entry name" value="Homeodomain-like_sf"/>
</dbReference>
<dbReference type="InterPro" id="IPR044847">
    <property type="entry name" value="KAN_fam"/>
</dbReference>
<dbReference type="InterPro" id="IPR006447">
    <property type="entry name" value="Myb_dom_plants"/>
</dbReference>
<dbReference type="InterPro" id="IPR001005">
    <property type="entry name" value="SANT/Myb"/>
</dbReference>
<dbReference type="NCBIfam" id="TIGR01557">
    <property type="entry name" value="myb_SHAQKYF"/>
    <property type="match status" value="1"/>
</dbReference>
<dbReference type="PANTHER" id="PTHR31496">
    <property type="entry name" value="TRANSCRIPTION FACTOR KAN2-RELATED"/>
    <property type="match status" value="1"/>
</dbReference>
<dbReference type="PANTHER" id="PTHR31496:SF56">
    <property type="entry name" value="TRANSCRIPTION FACTOR KAN4-RELATED"/>
    <property type="match status" value="1"/>
</dbReference>
<dbReference type="Pfam" id="PF00249">
    <property type="entry name" value="Myb_DNA-binding"/>
    <property type="match status" value="1"/>
</dbReference>
<dbReference type="SUPFAM" id="SSF46689">
    <property type="entry name" value="Homeodomain-like"/>
    <property type="match status" value="1"/>
</dbReference>
<keyword id="KW-0025">Alternative splicing</keyword>
<keyword id="KW-0217">Developmental protein</keyword>
<keyword id="KW-0221">Differentiation</keyword>
<keyword id="KW-0238">DNA-binding</keyword>
<keyword id="KW-0539">Nucleus</keyword>
<keyword id="KW-1185">Reference proteome</keyword>
<keyword id="KW-0804">Transcription</keyword>
<keyword id="KW-0805">Transcription regulation</keyword>
<evidence type="ECO:0000250" key="1"/>
<evidence type="ECO:0000256" key="2">
    <source>
        <dbReference type="SAM" id="MobiDB-lite"/>
    </source>
</evidence>
<evidence type="ECO:0000269" key="3">
    <source>
    </source>
</evidence>
<evidence type="ECO:0000269" key="4">
    <source>
    </source>
</evidence>
<evidence type="ECO:0000269" key="5">
    <source>
    </source>
</evidence>
<evidence type="ECO:0000269" key="6">
    <source>
    </source>
</evidence>
<evidence type="ECO:0000305" key="7"/>
<organism>
    <name type="scientific">Arabidopsis thaliana</name>
    <name type="common">Mouse-ear cress</name>
    <dbReference type="NCBI Taxonomy" id="3702"/>
    <lineage>
        <taxon>Eukaryota</taxon>
        <taxon>Viridiplantae</taxon>
        <taxon>Streptophyta</taxon>
        <taxon>Embryophyta</taxon>
        <taxon>Tracheophyta</taxon>
        <taxon>Spermatophyta</taxon>
        <taxon>Magnoliopsida</taxon>
        <taxon>eudicotyledons</taxon>
        <taxon>Gunneridae</taxon>
        <taxon>Pentapetalae</taxon>
        <taxon>rosids</taxon>
        <taxon>malvids</taxon>
        <taxon>Brassicales</taxon>
        <taxon>Brassicaceae</taxon>
        <taxon>Camelineae</taxon>
        <taxon>Arabidopsis</taxon>
    </lineage>
</organism>
<feature type="chain" id="PRO_0000408383" description="Probable transcription factor KAN4">
    <location>
        <begin position="1"/>
        <end position="276"/>
    </location>
</feature>
<feature type="domain" description="HTH myb-type">
    <location>
        <begin position="102"/>
        <end position="162"/>
    </location>
</feature>
<feature type="DNA-binding region" description="H-T-H motif" evidence="1">
    <location>
        <begin position="133"/>
        <end position="158"/>
    </location>
</feature>
<feature type="region of interest" description="Disordered" evidence="2">
    <location>
        <begin position="30"/>
        <end position="52"/>
    </location>
</feature>
<feature type="region of interest" description="Disordered" evidence="2">
    <location>
        <begin position="161"/>
        <end position="220"/>
    </location>
</feature>
<feature type="compositionally biased region" description="Low complexity" evidence="2">
    <location>
        <begin position="39"/>
        <end position="52"/>
    </location>
</feature>
<feature type="compositionally biased region" description="Basic and acidic residues" evidence="2">
    <location>
        <begin position="171"/>
        <end position="183"/>
    </location>
</feature>
<feature type="compositionally biased region" description="Acidic residues" evidence="2">
    <location>
        <begin position="185"/>
        <end position="194"/>
    </location>
</feature>
<feature type="compositionally biased region" description="Polar residues" evidence="2">
    <location>
        <begin position="195"/>
        <end position="220"/>
    </location>
</feature>
<feature type="splice variant" id="VSP_041078" description="In isoform 2." evidence="7">
    <original>ASWSSTKEVSRSIS</original>
    <variation>LLFIYIFIFVKFCI</variation>
    <location>
        <begin position="210"/>
        <end position="223"/>
    </location>
</feature>
<feature type="splice variant" id="VSP_041079" description="In isoform 2." evidence="7">
    <location>
        <begin position="224"/>
        <end position="276"/>
    </location>
</feature>
<feature type="mutagenesis site" description="In ats-2; ovules with a single integument." evidence="4">
    <original>P</original>
    <variation>L</variation>
    <location>
        <position position="133"/>
    </location>
</feature>
<gene>
    <name type="primary">KAN4</name>
    <name type="synonym">ATS</name>
    <name type="ordered locus">At5g42630</name>
    <name type="ORF">MFO20.5</name>
</gene>
<name>KAN4_ARATH</name>
<accession>Q9FJV5</accession>
<accession>B3H696</accession>
<comment type="function">
    <text evidence="4 5 6">Probable transcription factor that regulates carpel integuments formation. Required for the specification of polarity in the ovule inner integument. Modulates the content of flavonols and proanthocyanidin in seeds.</text>
</comment>
<comment type="subcellular location">
    <subcellularLocation>
        <location evidence="6">Nucleus</location>
    </subcellularLocation>
</comment>
<comment type="alternative products">
    <event type="alternative splicing"/>
    <isoform>
        <id>Q9FJV5-1</id>
        <name>1</name>
        <sequence type="displayed"/>
    </isoform>
    <isoform>
        <id>Q9FJV5-2</id>
        <name>2</name>
        <sequence type="described" ref="VSP_041078 VSP_041079"/>
    </isoform>
</comment>
<comment type="tissue specificity">
    <text evidence="3">Expressed in the periphery of the primary root apex and lateral root.</text>
</comment>
<comment type="developmental stage">
    <text evidence="4">During ovule development, first expressed in the inner integument primordium and then on the abaxial side of the inner integument.</text>
</comment>
<comment type="disruption phenotype">
    <text evidence="4">Ovules with a single integument instead of two.</text>
</comment>
<comment type="miscellaneous">
    <text>Plants overexpressing KAN4 show reduced or absent ovule outer integument and color alteration of the seed coat.</text>
</comment>
<sequence>MMMLESRNSMRASNSVPDLSLQISLPNYHAGKPLHGGDRSSTSSDSGSSLSDLSHENNFFNKPLLSLGFDHHHQRRSNMFQPQIYGRDFKRSSSSMVGLKRSIRAPRMRWTSTLHAHFVHAVQLLGGHERATPKSVLELMNVKDLTLAHVKSHLQMYRTVKCTDKGSPGEGKVEKEAEQRIEDNNNNEEADEGTDTNSPNSSSVQKTQRASWSSTKEVSRSISTQAYSHLGTTHHTKDNEEKEDTNIHLNLDFTLGRPSWGMEYAEPSSDLTLLKC</sequence>